<comment type="catalytic activity">
    <reaction>
        <text>(2R)-3-phosphoglycerate + ATP = (2R)-3-phospho-glyceroyl phosphate + ADP</text>
        <dbReference type="Rhea" id="RHEA:14801"/>
        <dbReference type="ChEBI" id="CHEBI:30616"/>
        <dbReference type="ChEBI" id="CHEBI:57604"/>
        <dbReference type="ChEBI" id="CHEBI:58272"/>
        <dbReference type="ChEBI" id="CHEBI:456216"/>
        <dbReference type="EC" id="2.7.2.3"/>
    </reaction>
</comment>
<comment type="pathway">
    <text>Carbohydrate degradation; glycolysis; pyruvate from D-glyceraldehyde 3-phosphate: step 2/5.</text>
</comment>
<comment type="subunit">
    <text>Monomer.</text>
</comment>
<comment type="subcellular location">
    <subcellularLocation>
        <location>Cytoplasm</location>
    </subcellularLocation>
</comment>
<comment type="similarity">
    <text evidence="2">Belongs to the phosphoglycerate kinase family.</text>
</comment>
<protein>
    <recommendedName>
        <fullName>Phosphoglycerate kinase</fullName>
        <ecNumber>2.7.2.3</ecNumber>
    </recommendedName>
</protein>
<name>PGK_CORGL</name>
<sequence>MAVKTLKDLLDEGVDGRHVIVRSDFNVPLNDDREITDKGRIIASLPTLKALSEGGAKVIVMAHLGRPKGEVNEKYSLAPVAEALSDELGQYVALAADVVGEDAHERANGLTEGDILLLENVRFDPRETSKDEAERTAFAQELAALAADNGAFVSDGFGVVHRAQTSVYDIAKLLPHYAGGLVETEISVLEKIAESPEAPYVVVLGGSKVSDKIGVIEALAAKADKIIVGGGMCYTFLAAQGHNVQQSLLQEEMKATCTDLLARFGDKIVLPVDLVAASEFNKDAEKQIVDLDSIPEGWMSLDIGPESVKNFGEVLSTAKTIFWNGPMGVFEFAAFSEGTRGIAQAIIDATAGNDAFSVVGGGDSAASVRVLGLNEDGFSHISTGGGASLEYLEGKELPGVAILAQ</sequence>
<organism>
    <name type="scientific">Corynebacterium glutamicum (strain ATCC 13032 / DSM 20300 / JCM 1318 / BCRC 11384 / CCUG 27702 / LMG 3730 / NBRC 12168 / NCIMB 10025 / NRRL B-2784 / 534)</name>
    <dbReference type="NCBI Taxonomy" id="196627"/>
    <lineage>
        <taxon>Bacteria</taxon>
        <taxon>Bacillati</taxon>
        <taxon>Actinomycetota</taxon>
        <taxon>Actinomycetes</taxon>
        <taxon>Mycobacteriales</taxon>
        <taxon>Corynebacteriaceae</taxon>
        <taxon>Corynebacterium</taxon>
    </lineage>
</organism>
<evidence type="ECO:0000250" key="1"/>
<evidence type="ECO:0000305" key="2"/>
<reference key="1">
    <citation type="journal article" date="1992" name="J. Bacteriol.">
        <title>Identification, sequence analysis, and expression of a Corynebacterium glutamicum gene cluster encoding the three glycolytic enzymes glyceraldehyde-3-phosphate dehydrogenase, 3-phosphoglycerate kinase, and triosephosphate isomerase.</title>
        <authorList>
            <person name="Eikmanns B.J."/>
        </authorList>
    </citation>
    <scope>NUCLEOTIDE SEQUENCE [GENOMIC DNA]</scope>
    <source>
        <strain>ATCC 13059 / LMG 3658 / NCIB 10332 / AS019 / 613</strain>
    </source>
</reference>
<reference key="2">
    <citation type="journal article" date="2003" name="Appl. Microbiol. Biotechnol.">
        <title>The Corynebacterium glutamicum genome: features and impacts on biotechnological processes.</title>
        <authorList>
            <person name="Ikeda M."/>
            <person name="Nakagawa S."/>
        </authorList>
    </citation>
    <scope>NUCLEOTIDE SEQUENCE [LARGE SCALE GENOMIC DNA]</scope>
    <source>
        <strain>ATCC 13032 / DSM 20300 / JCM 1318 / BCRC 11384 / CCUG 27702 / LMG 3730 / NBRC 12168 / NCIMB 10025 / NRRL B-2784 / 534</strain>
    </source>
</reference>
<reference key="3">
    <citation type="journal article" date="2003" name="J. Biotechnol.">
        <title>The complete Corynebacterium glutamicum ATCC 13032 genome sequence and its impact on the production of L-aspartate-derived amino acids and vitamins.</title>
        <authorList>
            <person name="Kalinowski J."/>
            <person name="Bathe B."/>
            <person name="Bartels D."/>
            <person name="Bischoff N."/>
            <person name="Bott M."/>
            <person name="Burkovski A."/>
            <person name="Dusch N."/>
            <person name="Eggeling L."/>
            <person name="Eikmanns B.J."/>
            <person name="Gaigalat L."/>
            <person name="Goesmann A."/>
            <person name="Hartmann M."/>
            <person name="Huthmacher K."/>
            <person name="Kraemer R."/>
            <person name="Linke B."/>
            <person name="McHardy A.C."/>
            <person name="Meyer F."/>
            <person name="Moeckel B."/>
            <person name="Pfefferle W."/>
            <person name="Puehler A."/>
            <person name="Rey D.A."/>
            <person name="Rueckert C."/>
            <person name="Rupp O."/>
            <person name="Sahm H."/>
            <person name="Wendisch V.F."/>
            <person name="Wiegraebe I."/>
            <person name="Tauch A."/>
        </authorList>
    </citation>
    <scope>NUCLEOTIDE SEQUENCE [LARGE SCALE GENOMIC DNA]</scope>
    <source>
        <strain>ATCC 13032 / DSM 20300 / JCM 1318 / BCRC 11384 / CCUG 27702 / LMG 3730 / NBRC 12168 / NCIMB 10025 / NRRL B-2784 / 534</strain>
    </source>
</reference>
<gene>
    <name type="primary">pgk</name>
    <name type="ordered locus">Cgl1587</name>
    <name type="ordered locus">cg1790</name>
</gene>
<proteinExistence type="inferred from homology"/>
<accession>Q01655</accession>
<feature type="chain" id="PRO_0000145937" description="Phosphoglycerate kinase">
    <location>
        <begin position="1"/>
        <end position="405"/>
    </location>
</feature>
<feature type="binding site" evidence="1">
    <location>
        <begin position="24"/>
        <end position="26"/>
    </location>
    <ligand>
        <name>substrate</name>
    </ligand>
</feature>
<feature type="binding site" evidence="1">
    <location>
        <position position="40"/>
    </location>
    <ligand>
        <name>substrate</name>
    </ligand>
</feature>
<feature type="binding site" evidence="1">
    <location>
        <begin position="63"/>
        <end position="66"/>
    </location>
    <ligand>
        <name>substrate</name>
    </ligand>
</feature>
<feature type="binding site" evidence="1">
    <location>
        <position position="122"/>
    </location>
    <ligand>
        <name>substrate</name>
    </ligand>
</feature>
<feature type="binding site" evidence="1">
    <location>
        <position position="162"/>
    </location>
    <ligand>
        <name>substrate</name>
    </ligand>
</feature>
<feature type="binding site" evidence="1">
    <location>
        <position position="212"/>
    </location>
    <ligand>
        <name>ATP</name>
        <dbReference type="ChEBI" id="CHEBI:30616"/>
    </ligand>
</feature>
<feature type="binding site" evidence="1">
    <location>
        <position position="331"/>
    </location>
    <ligand>
        <name>ATP</name>
        <dbReference type="ChEBI" id="CHEBI:30616"/>
    </ligand>
</feature>
<feature type="binding site" evidence="1">
    <location>
        <begin position="361"/>
        <end position="364"/>
    </location>
    <ligand>
        <name>ATP</name>
        <dbReference type="ChEBI" id="CHEBI:30616"/>
    </ligand>
</feature>
<feature type="sequence conflict" description="In Ref. 1; CAA42046." evidence="2" ref="1">
    <original>PK</original>
    <variation>Q</variation>
    <location>
        <begin position="67"/>
        <end position="68"/>
    </location>
</feature>
<feature type="sequence conflict" description="In Ref. 1; CAA42046." evidence="2" ref="1">
    <original>TA</original>
    <variation>NR</variation>
    <location>
        <begin position="136"/>
        <end position="137"/>
    </location>
</feature>
<feature type="sequence conflict" description="In Ref. 1; CAA42046." evidence="2" ref="1">
    <original>RFG</original>
    <variation>SV</variation>
    <location>
        <begin position="263"/>
        <end position="265"/>
    </location>
</feature>
<feature type="sequence conflict" description="In Ref. 1; CAA42046." evidence="2" ref="1">
    <original>GIAQAIIDAT</original>
    <variation>ASPRPSSMQH</variation>
    <location>
        <begin position="341"/>
        <end position="350"/>
    </location>
</feature>
<keyword id="KW-0067">ATP-binding</keyword>
<keyword id="KW-0963">Cytoplasm</keyword>
<keyword id="KW-0324">Glycolysis</keyword>
<keyword id="KW-0418">Kinase</keyword>
<keyword id="KW-0547">Nucleotide-binding</keyword>
<keyword id="KW-1185">Reference proteome</keyword>
<keyword id="KW-0808">Transferase</keyword>
<dbReference type="EC" id="2.7.2.3"/>
<dbReference type="EMBL" id="X59403">
    <property type="protein sequence ID" value="CAA42046.1"/>
    <property type="molecule type" value="Genomic_DNA"/>
</dbReference>
<dbReference type="EMBL" id="BA000036">
    <property type="protein sequence ID" value="BAB98980.1"/>
    <property type="molecule type" value="Genomic_DNA"/>
</dbReference>
<dbReference type="EMBL" id="BX927152">
    <property type="protein sequence ID" value="CAF21595.1"/>
    <property type="molecule type" value="Genomic_DNA"/>
</dbReference>
<dbReference type="PIR" id="B43260">
    <property type="entry name" value="B43260"/>
</dbReference>
<dbReference type="RefSeq" id="NP_600801.1">
    <property type="nucleotide sequence ID" value="NC_003450.3"/>
</dbReference>
<dbReference type="RefSeq" id="WP_003862252.1">
    <property type="nucleotide sequence ID" value="NC_006958.1"/>
</dbReference>
<dbReference type="SMR" id="Q01655"/>
<dbReference type="STRING" id="196627.cg1790"/>
<dbReference type="GeneID" id="1019555"/>
<dbReference type="KEGG" id="cgb:cg1790"/>
<dbReference type="KEGG" id="cgl:Cgl1587"/>
<dbReference type="PATRIC" id="fig|196627.13.peg.1549"/>
<dbReference type="eggNOG" id="COG0126">
    <property type="taxonomic scope" value="Bacteria"/>
</dbReference>
<dbReference type="HOGENOM" id="CLU_025427_0_2_11"/>
<dbReference type="OrthoDB" id="9808460at2"/>
<dbReference type="BioCyc" id="CORYNE:G18NG-11172-MONOMER"/>
<dbReference type="BRENDA" id="2.7.2.3">
    <property type="organism ID" value="960"/>
</dbReference>
<dbReference type="UniPathway" id="UPA00109">
    <property type="reaction ID" value="UER00185"/>
</dbReference>
<dbReference type="Proteomes" id="UP000000582">
    <property type="component" value="Chromosome"/>
</dbReference>
<dbReference type="Proteomes" id="UP000001009">
    <property type="component" value="Chromosome"/>
</dbReference>
<dbReference type="GO" id="GO:0005829">
    <property type="term" value="C:cytosol"/>
    <property type="evidence" value="ECO:0007669"/>
    <property type="project" value="TreeGrafter"/>
</dbReference>
<dbReference type="GO" id="GO:0043531">
    <property type="term" value="F:ADP binding"/>
    <property type="evidence" value="ECO:0007669"/>
    <property type="project" value="TreeGrafter"/>
</dbReference>
<dbReference type="GO" id="GO:0005524">
    <property type="term" value="F:ATP binding"/>
    <property type="evidence" value="ECO:0007669"/>
    <property type="project" value="UniProtKB-KW"/>
</dbReference>
<dbReference type="GO" id="GO:0004618">
    <property type="term" value="F:phosphoglycerate kinase activity"/>
    <property type="evidence" value="ECO:0007669"/>
    <property type="project" value="UniProtKB-UniRule"/>
</dbReference>
<dbReference type="GO" id="GO:0006094">
    <property type="term" value="P:gluconeogenesis"/>
    <property type="evidence" value="ECO:0007669"/>
    <property type="project" value="TreeGrafter"/>
</dbReference>
<dbReference type="GO" id="GO:0006096">
    <property type="term" value="P:glycolytic process"/>
    <property type="evidence" value="ECO:0007669"/>
    <property type="project" value="UniProtKB-UniRule"/>
</dbReference>
<dbReference type="CDD" id="cd00318">
    <property type="entry name" value="Phosphoglycerate_kinase"/>
    <property type="match status" value="1"/>
</dbReference>
<dbReference type="FunFam" id="3.40.50.1260:FF:000006">
    <property type="entry name" value="Phosphoglycerate kinase"/>
    <property type="match status" value="1"/>
</dbReference>
<dbReference type="FunFam" id="3.40.50.1260:FF:000031">
    <property type="entry name" value="Phosphoglycerate kinase 1"/>
    <property type="match status" value="1"/>
</dbReference>
<dbReference type="Gene3D" id="3.40.50.1260">
    <property type="entry name" value="Phosphoglycerate kinase, N-terminal domain"/>
    <property type="match status" value="2"/>
</dbReference>
<dbReference type="HAMAP" id="MF_00145">
    <property type="entry name" value="Phosphoglyc_kinase"/>
    <property type="match status" value="1"/>
</dbReference>
<dbReference type="InterPro" id="IPR001576">
    <property type="entry name" value="Phosphoglycerate_kinase"/>
</dbReference>
<dbReference type="InterPro" id="IPR015911">
    <property type="entry name" value="Phosphoglycerate_kinase_CS"/>
</dbReference>
<dbReference type="InterPro" id="IPR015824">
    <property type="entry name" value="Phosphoglycerate_kinase_N"/>
</dbReference>
<dbReference type="InterPro" id="IPR036043">
    <property type="entry name" value="Phosphoglycerate_kinase_sf"/>
</dbReference>
<dbReference type="PANTHER" id="PTHR11406">
    <property type="entry name" value="PHOSPHOGLYCERATE KINASE"/>
    <property type="match status" value="1"/>
</dbReference>
<dbReference type="PANTHER" id="PTHR11406:SF23">
    <property type="entry name" value="PHOSPHOGLYCERATE KINASE 1, CHLOROPLASTIC-RELATED"/>
    <property type="match status" value="1"/>
</dbReference>
<dbReference type="Pfam" id="PF00162">
    <property type="entry name" value="PGK"/>
    <property type="match status" value="1"/>
</dbReference>
<dbReference type="PIRSF" id="PIRSF000724">
    <property type="entry name" value="Pgk"/>
    <property type="match status" value="1"/>
</dbReference>
<dbReference type="PRINTS" id="PR00477">
    <property type="entry name" value="PHGLYCKINASE"/>
</dbReference>
<dbReference type="SUPFAM" id="SSF53748">
    <property type="entry name" value="Phosphoglycerate kinase"/>
    <property type="match status" value="1"/>
</dbReference>
<dbReference type="PROSITE" id="PS00111">
    <property type="entry name" value="PGLYCERATE_KINASE"/>
    <property type="match status" value="1"/>
</dbReference>